<keyword id="KW-0597">Phosphoprotein</keyword>
<feature type="chain" id="PRO_0000379008" description="FHIP family protein GG24907">
    <location>
        <begin position="1"/>
        <end position="1039"/>
    </location>
</feature>
<feature type="region of interest" description="Disordered" evidence="2">
    <location>
        <begin position="831"/>
        <end position="877"/>
    </location>
</feature>
<feature type="region of interest" description="Disordered" evidence="2">
    <location>
        <begin position="904"/>
        <end position="945"/>
    </location>
</feature>
<feature type="region of interest" description="Disordered" evidence="2">
    <location>
        <begin position="957"/>
        <end position="984"/>
    </location>
</feature>
<feature type="compositionally biased region" description="Polar residues" evidence="2">
    <location>
        <begin position="855"/>
        <end position="877"/>
    </location>
</feature>
<feature type="compositionally biased region" description="Polar residues" evidence="2">
    <location>
        <begin position="904"/>
        <end position="924"/>
    </location>
</feature>
<feature type="compositionally biased region" description="Low complexity" evidence="2">
    <location>
        <begin position="925"/>
        <end position="945"/>
    </location>
</feature>
<feature type="compositionally biased region" description="Polar residues" evidence="2">
    <location>
        <begin position="957"/>
        <end position="966"/>
    </location>
</feature>
<feature type="modified residue" description="Phosphoserine" evidence="1">
    <location>
        <position position="498"/>
    </location>
</feature>
<feature type="modified residue" description="Phosphoserine" evidence="1">
    <location>
        <position position="805"/>
    </location>
</feature>
<proteinExistence type="inferred from homology"/>
<gene>
    <name type="ORF">GG24907</name>
</gene>
<comment type="similarity">
    <text evidence="3">Belongs to the FHIP family.</text>
</comment>
<organism>
    <name type="scientific">Drosophila erecta</name>
    <name type="common">Fruit fly</name>
    <dbReference type="NCBI Taxonomy" id="7220"/>
    <lineage>
        <taxon>Eukaryota</taxon>
        <taxon>Metazoa</taxon>
        <taxon>Ecdysozoa</taxon>
        <taxon>Arthropoda</taxon>
        <taxon>Hexapoda</taxon>
        <taxon>Insecta</taxon>
        <taxon>Pterygota</taxon>
        <taxon>Neoptera</taxon>
        <taxon>Endopterygota</taxon>
        <taxon>Diptera</taxon>
        <taxon>Brachycera</taxon>
        <taxon>Muscomorpha</taxon>
        <taxon>Ephydroidea</taxon>
        <taxon>Drosophilidae</taxon>
        <taxon>Drosophila</taxon>
        <taxon>Sophophora</taxon>
    </lineage>
</organism>
<reference key="1">
    <citation type="journal article" date="2007" name="Nature">
        <title>Evolution of genes and genomes on the Drosophila phylogeny.</title>
        <authorList>
            <consortium name="Drosophila 12 genomes consortium"/>
        </authorList>
    </citation>
    <scope>NUCLEOTIDE SEQUENCE [LARGE SCALE GENOMIC DNA]</scope>
    <source>
        <strain>Tucson 14021-0224.01</strain>
    </source>
</reference>
<dbReference type="EMBL" id="CH954177">
    <property type="protein sequence ID" value="EDV57562.1"/>
    <property type="molecule type" value="Genomic_DNA"/>
</dbReference>
<dbReference type="SMR" id="B3NAN9"/>
<dbReference type="EnsemblMetazoa" id="FBtr0144961">
    <property type="protein sequence ID" value="FBpp0143453"/>
    <property type="gene ID" value="FBgn0117036"/>
</dbReference>
<dbReference type="EnsemblMetazoa" id="XM_001968467.3">
    <property type="protein sequence ID" value="XP_001968503.1"/>
    <property type="gene ID" value="LOC6541324"/>
</dbReference>
<dbReference type="GeneID" id="6541324"/>
<dbReference type="KEGG" id="der:6541324"/>
<dbReference type="eggNOG" id="KOG3695">
    <property type="taxonomic scope" value="Eukaryota"/>
</dbReference>
<dbReference type="HOGENOM" id="CLU_007807_0_0_1"/>
<dbReference type="OMA" id="RMPSLVQ"/>
<dbReference type="OrthoDB" id="6287422at2759"/>
<dbReference type="PhylomeDB" id="B3NAN9"/>
<dbReference type="Proteomes" id="UP000008711">
    <property type="component" value="Unassembled WGS sequence"/>
</dbReference>
<dbReference type="InterPro" id="IPR019384">
    <property type="entry name" value="FHIP"/>
</dbReference>
<dbReference type="InterPro" id="IPR045669">
    <property type="entry name" value="FHIP_C"/>
</dbReference>
<dbReference type="InterPro" id="IPR045668">
    <property type="entry name" value="FHIP_KELAA_motif"/>
</dbReference>
<dbReference type="PANTHER" id="PTHR21705:SF11">
    <property type="entry name" value="FHIP FAMILY PROTEIN CG3558"/>
    <property type="match status" value="1"/>
</dbReference>
<dbReference type="PANTHER" id="PTHR21705">
    <property type="entry name" value="RAI16 PROTEIN-RELATED"/>
    <property type="match status" value="1"/>
</dbReference>
<dbReference type="Pfam" id="PF19314">
    <property type="entry name" value="DUF5917"/>
    <property type="match status" value="1"/>
</dbReference>
<dbReference type="Pfam" id="PF19311">
    <property type="entry name" value="KELAA"/>
    <property type="match status" value="1"/>
</dbReference>
<dbReference type="Pfam" id="PF10257">
    <property type="entry name" value="RAI16-like"/>
    <property type="match status" value="1"/>
</dbReference>
<evidence type="ECO:0000250" key="1"/>
<evidence type="ECO:0000256" key="2">
    <source>
        <dbReference type="SAM" id="MobiDB-lite"/>
    </source>
</evidence>
<evidence type="ECO:0000305" key="3"/>
<name>U518_DROER</name>
<protein>
    <recommendedName>
        <fullName>FHIP family protein GG24907</fullName>
    </recommendedName>
</protein>
<sequence length="1039" mass="113700">MWLRQSSGGGVASAGHGGPLRQRPIDAATDCDPRACYDSFCKHWQQAFEIIQHSAPPSHDDVLGVVSHLDYMVTLLLVELHHCNKVSLPAAEASGPPAAPCLEFLLSENLLDKLYEWACTTGRYANAVRLEQLKLYELLVSHSRHQLLCHEPFLRPLLKILASSQGEIFPPDLEKRLVILLNQLCVVLMQNVHLLDLFFFSAQTQVQEQILNGNVAPPKSGTTTNFIIFSLLIPYVHREGSLGHQARDALLLCMALSQKNSNIGTYIAQYSSICPLLVTGLGGLYSRLPNSIEISSIDWHRITPDDVTEIPELTLFMNALEFCNAVVQVAHEMIKQQLLDFMYQGFIVPVLGPAILQTLKGKHFQTNIDSQISAMSYLDLILRSITEPGLLRAFVRFLLDTEKFDGERILDALVERLNSPDANLCMVTMALFDTLLGLHCEDLMLELLLKFMLPGKHVPISHRHKINKIDPYLNSSEFFLDLSPDVMKRARDLARPKSVHEPVVSDLTPLPSLPSPVMSKTIGANWNYYGVHTGDSLYANIQAYLFEAHWRIAQCQRDCLKWANSYRYQKWPRHGQGRVHAHALELARQFFSEFGGGPIAANETGEKQLDSLQSIGESSGYESFKWRPADEESEATDTTLATTASEADLDHNSSSLSSVLGASGKREAWRTSNNNRNELILTDLDFSEDLFAQGTVSLGPFLNAIWGKLQTFTSNSLYVNLHLTGLITRLAWYPLPLIHSLLLRSDIAITSDTPSFHQVLRILKQQIDAELPVTEDSLEIIDVARSSLIDREFRLANARKGNEGSPMHHSQQQQMVTNSYATLSAATPVQATPTSAYDPFKRSDKKRRSISKSITSMFSRKSASTSTTPPNGSSASSGLSQIYAFFTGAASNLVGNNASNDGRGISQAQTSAGTCETSLSTQPQAGASRTGATATSAAASGSNSSIAGSTLTLSAQSNTTTHSASTLHGLDGGPSTGGFNSEPASLDSVASMGIIASTSGTERSRDLALCAVLMDEWLKELAAIAQEQSVVLVTEQGSL</sequence>
<accession>B3NAN9</accession>